<evidence type="ECO:0000255" key="1">
    <source>
        <dbReference type="HAMAP-Rule" id="MF_01334"/>
    </source>
</evidence>
<evidence type="ECO:0000305" key="2"/>
<reference key="1">
    <citation type="journal article" date="2008" name="Mol. Biol. Evol.">
        <title>Genome evolution of Wolbachia strain wPip from the Culex pipiens group.</title>
        <authorList>
            <person name="Klasson L."/>
            <person name="Walker T."/>
            <person name="Sebaihia M."/>
            <person name="Sanders M.J."/>
            <person name="Quail M.A."/>
            <person name="Lord A."/>
            <person name="Sanders S."/>
            <person name="Earl J."/>
            <person name="O'Neill S.L."/>
            <person name="Thomson N."/>
            <person name="Sinkins S.P."/>
            <person name="Parkhill J."/>
        </authorList>
    </citation>
    <scope>NUCLEOTIDE SEQUENCE [LARGE SCALE GENOMIC DNA]</scope>
    <source>
        <strain>wPip</strain>
    </source>
</reference>
<dbReference type="EMBL" id="AM999887">
    <property type="protein sequence ID" value="CAQ55038.1"/>
    <property type="molecule type" value="Genomic_DNA"/>
</dbReference>
<dbReference type="RefSeq" id="WP_007302321.1">
    <property type="nucleotide sequence ID" value="NC_010981.1"/>
</dbReference>
<dbReference type="SMR" id="B3CMB8"/>
<dbReference type="KEGG" id="wpi:WP0930"/>
<dbReference type="eggNOG" id="COG1825">
    <property type="taxonomic scope" value="Bacteria"/>
</dbReference>
<dbReference type="HOGENOM" id="CLU_075939_0_1_5"/>
<dbReference type="Proteomes" id="UP000008814">
    <property type="component" value="Chromosome"/>
</dbReference>
<dbReference type="GO" id="GO:0022625">
    <property type="term" value="C:cytosolic large ribosomal subunit"/>
    <property type="evidence" value="ECO:0007669"/>
    <property type="project" value="TreeGrafter"/>
</dbReference>
<dbReference type="GO" id="GO:0008097">
    <property type="term" value="F:5S rRNA binding"/>
    <property type="evidence" value="ECO:0007669"/>
    <property type="project" value="InterPro"/>
</dbReference>
<dbReference type="GO" id="GO:0003735">
    <property type="term" value="F:structural constituent of ribosome"/>
    <property type="evidence" value="ECO:0007669"/>
    <property type="project" value="InterPro"/>
</dbReference>
<dbReference type="GO" id="GO:0006412">
    <property type="term" value="P:translation"/>
    <property type="evidence" value="ECO:0007669"/>
    <property type="project" value="UniProtKB-UniRule"/>
</dbReference>
<dbReference type="CDD" id="cd00495">
    <property type="entry name" value="Ribosomal_L25_TL5_CTC"/>
    <property type="match status" value="1"/>
</dbReference>
<dbReference type="Gene3D" id="2.170.120.20">
    <property type="entry name" value="Ribosomal protein L25, beta domain"/>
    <property type="match status" value="1"/>
</dbReference>
<dbReference type="Gene3D" id="2.40.240.10">
    <property type="entry name" value="Ribosomal Protein L25, Chain P"/>
    <property type="match status" value="1"/>
</dbReference>
<dbReference type="HAMAP" id="MF_01334">
    <property type="entry name" value="Ribosomal_bL25_CTC"/>
    <property type="match status" value="1"/>
</dbReference>
<dbReference type="InterPro" id="IPR020056">
    <property type="entry name" value="Rbsml_bL25/Gln-tRNA_synth_N"/>
</dbReference>
<dbReference type="InterPro" id="IPR011035">
    <property type="entry name" value="Ribosomal_bL25/Gln-tRNA_synth"/>
</dbReference>
<dbReference type="InterPro" id="IPR020057">
    <property type="entry name" value="Ribosomal_bL25_b-dom"/>
</dbReference>
<dbReference type="InterPro" id="IPR037121">
    <property type="entry name" value="Ribosomal_bL25_C"/>
</dbReference>
<dbReference type="InterPro" id="IPR001021">
    <property type="entry name" value="Ribosomal_bL25_long"/>
</dbReference>
<dbReference type="InterPro" id="IPR029751">
    <property type="entry name" value="Ribosomal_L25_dom"/>
</dbReference>
<dbReference type="InterPro" id="IPR020930">
    <property type="entry name" value="Ribosomal_uL5_bac-type"/>
</dbReference>
<dbReference type="NCBIfam" id="TIGR00731">
    <property type="entry name" value="bL25_bact_ctc"/>
    <property type="match status" value="1"/>
</dbReference>
<dbReference type="NCBIfam" id="NF004128">
    <property type="entry name" value="PRK05618.1-2"/>
    <property type="match status" value="1"/>
</dbReference>
<dbReference type="NCBIfam" id="NF004138">
    <property type="entry name" value="PRK05618.4-1"/>
    <property type="match status" value="1"/>
</dbReference>
<dbReference type="NCBIfam" id="NF004612">
    <property type="entry name" value="PRK05943.1"/>
    <property type="match status" value="1"/>
</dbReference>
<dbReference type="PANTHER" id="PTHR33284">
    <property type="entry name" value="RIBOSOMAL PROTEIN L25/GLN-TRNA SYNTHETASE, ANTI-CODON-BINDING DOMAIN-CONTAINING PROTEIN"/>
    <property type="match status" value="1"/>
</dbReference>
<dbReference type="PANTHER" id="PTHR33284:SF1">
    <property type="entry name" value="RIBOSOMAL PROTEIN L25_GLN-TRNA SYNTHETASE, ANTI-CODON-BINDING DOMAIN-CONTAINING PROTEIN"/>
    <property type="match status" value="1"/>
</dbReference>
<dbReference type="Pfam" id="PF01386">
    <property type="entry name" value="Ribosomal_L25p"/>
    <property type="match status" value="1"/>
</dbReference>
<dbReference type="Pfam" id="PF14693">
    <property type="entry name" value="Ribosomal_TL5_C"/>
    <property type="match status" value="1"/>
</dbReference>
<dbReference type="SUPFAM" id="SSF50715">
    <property type="entry name" value="Ribosomal protein L25-like"/>
    <property type="match status" value="1"/>
</dbReference>
<sequence>MAQQEMVTINAELRDVKKKKAMQALREKGSIPAVIYGKGHDNVNLTLSAKEFTKQYKSGALSAHLIELDISGKKEYALVRDIQWHVVKDTVQHVDFQFVDKGSEIKIDIPLSFINESKSPGIKLGGVLNVLCRSITVKCSPEKIPQVIEIDLSGKMIGQSIHINDVKLPEGVKFVAHEEENFTIVTISAADSDVEETQTKTEE</sequence>
<proteinExistence type="inferred from homology"/>
<name>RL25_WOLPP</name>
<accession>B3CMB8</accession>
<protein>
    <recommendedName>
        <fullName evidence="1">Large ribosomal subunit protein bL25</fullName>
    </recommendedName>
    <alternativeName>
        <fullName evidence="2">50S ribosomal protein L25</fullName>
    </alternativeName>
    <alternativeName>
        <fullName evidence="1">General stress protein CTC</fullName>
    </alternativeName>
</protein>
<keyword id="KW-0687">Ribonucleoprotein</keyword>
<keyword id="KW-0689">Ribosomal protein</keyword>
<keyword id="KW-0694">RNA-binding</keyword>
<keyword id="KW-0699">rRNA-binding</keyword>
<organism>
    <name type="scientific">Wolbachia pipientis subsp. Culex pipiens (strain wPip)</name>
    <dbReference type="NCBI Taxonomy" id="570417"/>
    <lineage>
        <taxon>Bacteria</taxon>
        <taxon>Pseudomonadati</taxon>
        <taxon>Pseudomonadota</taxon>
        <taxon>Alphaproteobacteria</taxon>
        <taxon>Rickettsiales</taxon>
        <taxon>Anaplasmataceae</taxon>
        <taxon>Wolbachieae</taxon>
        <taxon>Wolbachia</taxon>
    </lineage>
</organism>
<gene>
    <name evidence="1" type="primary">rplY</name>
    <name evidence="1" type="synonym">ctc</name>
    <name type="ordered locus">WP0930</name>
</gene>
<feature type="chain" id="PRO_1000142562" description="Large ribosomal subunit protein bL25">
    <location>
        <begin position="1"/>
        <end position="203"/>
    </location>
</feature>
<comment type="function">
    <text evidence="1">This is one of the proteins that binds to the 5S RNA in the ribosome where it forms part of the central protuberance.</text>
</comment>
<comment type="subunit">
    <text evidence="1">Part of the 50S ribosomal subunit; part of the 5S rRNA/L5/L18/L25 subcomplex. Contacts the 5S rRNA. Binds to the 5S rRNA independently of L5 and L18.</text>
</comment>
<comment type="similarity">
    <text evidence="1">Belongs to the bacterial ribosomal protein bL25 family. CTC subfamily.</text>
</comment>